<gene>
    <name type="primary">ADY2</name>
    <name type="synonym">ATO1</name>
    <name type="ordered locus">YCR010C</name>
    <name type="ORF">YCR10C</name>
</gene>
<feature type="chain" id="PRO_0000135706" description="Accumulation of dyads protein 2">
    <location>
        <begin position="1"/>
        <end position="283"/>
    </location>
</feature>
<feature type="topological domain" description="Cytoplasmic" evidence="1">
    <location>
        <begin position="1"/>
        <end position="89"/>
    </location>
</feature>
<feature type="transmembrane region" description="Helical" evidence="1">
    <location>
        <begin position="90"/>
        <end position="110"/>
    </location>
</feature>
<feature type="topological domain" description="Extracellular" evidence="1">
    <location>
        <begin position="111"/>
        <end position="120"/>
    </location>
</feature>
<feature type="transmembrane region" description="Helical" evidence="1">
    <location>
        <begin position="121"/>
        <end position="141"/>
    </location>
</feature>
<feature type="topological domain" description="Cytoplasmic" evidence="1">
    <location>
        <begin position="142"/>
        <end position="151"/>
    </location>
</feature>
<feature type="transmembrane region" description="Helical" evidence="1">
    <location>
        <begin position="152"/>
        <end position="172"/>
    </location>
</feature>
<feature type="topological domain" description="Extracellular" evidence="1">
    <location>
        <begin position="173"/>
        <end position="185"/>
    </location>
</feature>
<feature type="transmembrane region" description="Helical" evidence="1">
    <location>
        <begin position="186"/>
        <end position="206"/>
    </location>
</feature>
<feature type="topological domain" description="Cytoplasmic" evidence="1">
    <location>
        <begin position="207"/>
        <end position="208"/>
    </location>
</feature>
<feature type="transmembrane region" description="Helical" evidence="1">
    <location>
        <begin position="209"/>
        <end position="229"/>
    </location>
</feature>
<feature type="topological domain" description="Extracellular" evidence="1">
    <location>
        <begin position="230"/>
        <end position="240"/>
    </location>
</feature>
<feature type="transmembrane region" description="Helical" evidence="1">
    <location>
        <begin position="241"/>
        <end position="261"/>
    </location>
</feature>
<feature type="topological domain" description="Cytoplasmic" evidence="1">
    <location>
        <begin position="262"/>
        <end position="283"/>
    </location>
</feature>
<feature type="region of interest" description="Disordered" evidence="2">
    <location>
        <begin position="1"/>
        <end position="41"/>
    </location>
</feature>
<accession>P25613</accession>
<accession>D6VR19</accession>
<proteinExistence type="evidence at protein level"/>
<name>ADY2_YEAST</name>
<organism>
    <name type="scientific">Saccharomyces cerevisiae (strain ATCC 204508 / S288c)</name>
    <name type="common">Baker's yeast</name>
    <dbReference type="NCBI Taxonomy" id="559292"/>
    <lineage>
        <taxon>Eukaryota</taxon>
        <taxon>Fungi</taxon>
        <taxon>Dikarya</taxon>
        <taxon>Ascomycota</taxon>
        <taxon>Saccharomycotina</taxon>
        <taxon>Saccharomycetes</taxon>
        <taxon>Saccharomycetales</taxon>
        <taxon>Saccharomycetaceae</taxon>
        <taxon>Saccharomyces</taxon>
    </lineage>
</organism>
<dbReference type="EMBL" id="X59720">
    <property type="protein sequence ID" value="CAA42327.1"/>
    <property type="molecule type" value="Genomic_DNA"/>
</dbReference>
<dbReference type="EMBL" id="BK006937">
    <property type="protein sequence ID" value="DAA07488.1"/>
    <property type="molecule type" value="Genomic_DNA"/>
</dbReference>
<dbReference type="PIR" id="S19420">
    <property type="entry name" value="S19420"/>
</dbReference>
<dbReference type="RefSeq" id="NP_009936.1">
    <property type="nucleotide sequence ID" value="NM_001178723.1"/>
</dbReference>
<dbReference type="SMR" id="P25613"/>
<dbReference type="BioGRID" id="30989">
    <property type="interactions" value="86"/>
</dbReference>
<dbReference type="DIP" id="DIP-7894N"/>
<dbReference type="FunCoup" id="P25613">
    <property type="interactions" value="80"/>
</dbReference>
<dbReference type="IntAct" id="P25613">
    <property type="interactions" value="14"/>
</dbReference>
<dbReference type="MINT" id="P25613"/>
<dbReference type="STRING" id="4932.YCR010C"/>
<dbReference type="TCDB" id="2.A.96.1.4">
    <property type="family name" value="the acetate uptake transporter (acetr) family"/>
</dbReference>
<dbReference type="CarbonylDB" id="P25613"/>
<dbReference type="iPTMnet" id="P25613"/>
<dbReference type="PaxDb" id="4932-YCR010C"/>
<dbReference type="PeptideAtlas" id="P25613"/>
<dbReference type="EnsemblFungi" id="YCR010C_mRNA">
    <property type="protein sequence ID" value="YCR010C"/>
    <property type="gene ID" value="YCR010C"/>
</dbReference>
<dbReference type="GeneID" id="850368"/>
<dbReference type="KEGG" id="sce:YCR010C"/>
<dbReference type="AGR" id="SGD:S000000603"/>
<dbReference type="SGD" id="S000000603">
    <property type="gene designation" value="ADY2"/>
</dbReference>
<dbReference type="VEuPathDB" id="FungiDB:YCR010C"/>
<dbReference type="eggNOG" id="ENOG502QUJS">
    <property type="taxonomic scope" value="Eukaryota"/>
</dbReference>
<dbReference type="GeneTree" id="ENSGT00940000176398"/>
<dbReference type="HOGENOM" id="CLU_051062_0_0_1"/>
<dbReference type="InParanoid" id="P25613"/>
<dbReference type="OMA" id="WKKGNTF"/>
<dbReference type="OrthoDB" id="3648309at2759"/>
<dbReference type="BioCyc" id="YEAST:G3O-29327-MONOMER"/>
<dbReference type="BioGRID-ORCS" id="850368">
    <property type="hits" value="10 hits in 10 CRISPR screens"/>
</dbReference>
<dbReference type="PRO" id="PR:P25613"/>
<dbReference type="Proteomes" id="UP000002311">
    <property type="component" value="Chromosome III"/>
</dbReference>
<dbReference type="RNAct" id="P25613">
    <property type="molecule type" value="protein"/>
</dbReference>
<dbReference type="GO" id="GO:0005739">
    <property type="term" value="C:mitochondrion"/>
    <property type="evidence" value="ECO:0007005"/>
    <property type="project" value="SGD"/>
</dbReference>
<dbReference type="GO" id="GO:0005886">
    <property type="term" value="C:plasma membrane"/>
    <property type="evidence" value="ECO:0000314"/>
    <property type="project" value="SGD"/>
</dbReference>
<dbReference type="GO" id="GO:0005774">
    <property type="term" value="C:vacuolar membrane"/>
    <property type="evidence" value="ECO:0007669"/>
    <property type="project" value="UniProtKB-SubCell"/>
</dbReference>
<dbReference type="GO" id="GO:0015123">
    <property type="term" value="F:acetate transmembrane transporter activity"/>
    <property type="evidence" value="ECO:0000315"/>
    <property type="project" value="SGD"/>
</dbReference>
<dbReference type="GO" id="GO:0008519">
    <property type="term" value="F:ammonium channel activity"/>
    <property type="evidence" value="ECO:0000315"/>
    <property type="project" value="SGD"/>
</dbReference>
<dbReference type="GO" id="GO:0006846">
    <property type="term" value="P:acetate transport"/>
    <property type="evidence" value="ECO:0000315"/>
    <property type="project" value="SGD"/>
</dbReference>
<dbReference type="GO" id="GO:0072488">
    <property type="term" value="P:ammonium transmembrane transport"/>
    <property type="evidence" value="ECO:0000315"/>
    <property type="project" value="SGD"/>
</dbReference>
<dbReference type="GO" id="GO:0051321">
    <property type="term" value="P:meiotic cell cycle"/>
    <property type="evidence" value="ECO:0007669"/>
    <property type="project" value="UniProtKB-KW"/>
</dbReference>
<dbReference type="GO" id="GO:0006811">
    <property type="term" value="P:monoatomic ion transport"/>
    <property type="evidence" value="ECO:0007669"/>
    <property type="project" value="UniProtKB-KW"/>
</dbReference>
<dbReference type="GO" id="GO:0019740">
    <property type="term" value="P:nitrogen utilization"/>
    <property type="evidence" value="ECO:0000315"/>
    <property type="project" value="SGD"/>
</dbReference>
<dbReference type="GO" id="GO:0055085">
    <property type="term" value="P:transmembrane transport"/>
    <property type="evidence" value="ECO:0000315"/>
    <property type="project" value="SGD"/>
</dbReference>
<dbReference type="InterPro" id="IPR051633">
    <property type="entry name" value="AceTr"/>
</dbReference>
<dbReference type="InterPro" id="IPR000791">
    <property type="entry name" value="Gpr1/Fun34/SatP-like"/>
</dbReference>
<dbReference type="InterPro" id="IPR047622">
    <property type="entry name" value="GPR1_FUN34_YAAH"/>
</dbReference>
<dbReference type="NCBIfam" id="NF038013">
    <property type="entry name" value="AceTr_1"/>
    <property type="match status" value="1"/>
</dbReference>
<dbReference type="PANTHER" id="PTHR31123">
    <property type="entry name" value="ACCUMULATION OF DYADS PROTEIN 2-RELATED"/>
    <property type="match status" value="1"/>
</dbReference>
<dbReference type="PANTHER" id="PTHR31123:SF1">
    <property type="entry name" value="ACCUMULATION OF DYADS PROTEIN 2-RELATED"/>
    <property type="match status" value="1"/>
</dbReference>
<dbReference type="Pfam" id="PF01184">
    <property type="entry name" value="Gpr1_Fun34_YaaH"/>
    <property type="match status" value="1"/>
</dbReference>
<dbReference type="PROSITE" id="PS01114">
    <property type="entry name" value="GPR1_FUN34_YAAH"/>
    <property type="match status" value="1"/>
</dbReference>
<evidence type="ECO:0000255" key="1"/>
<evidence type="ECO:0000256" key="2">
    <source>
        <dbReference type="SAM" id="MobiDB-lite"/>
    </source>
</evidence>
<evidence type="ECO:0000269" key="3">
    <source>
    </source>
</evidence>
<evidence type="ECO:0000269" key="4">
    <source>
    </source>
</evidence>
<evidence type="ECO:0000269" key="5">
    <source>
    </source>
</evidence>
<evidence type="ECO:0000269" key="6">
    <source>
    </source>
</evidence>
<evidence type="ECO:0000269" key="7">
    <source>
    </source>
</evidence>
<evidence type="ECO:0000269" key="8">
    <source>
    </source>
</evidence>
<evidence type="ECO:0000305" key="9"/>
<protein>
    <recommendedName>
        <fullName>Accumulation of dyads protein 2</fullName>
    </recommendedName>
    <alternativeName>
        <fullName>Ammonia transport outward protein 1</fullName>
    </alternativeName>
</protein>
<sequence length="283" mass="30726">MSDKEQTSGNTDLENAPAGYYSSHDNDVNGVAEDERPSHDSLGKIYTGGDNNEYIYIGRQKFLKSDLYQAFGGTLNPGLAPAPVHKFANPAPLGLSAFALTTFVLSMFNARAQGITVPNVVVGCAMFYGGLVQLIAGIWEIALENTFGGTALCSYGGFWLSFAAIYIPWFGILEAYEDNESDLNNALGFYLLGWAIFTFGLTVCTMKSTVMFFLLFFLLALTFLLLSIGHFANRLGVTRAGGVLGVVVAFIAWYNAYAGVATKQNSYVLARPFPLPSTERVIF</sequence>
<comment type="function">
    <text evidence="3 4 5 6 7">Transporter protein required for ammonia export and acetate uptake and resistance. Necessary for up-regulation and down-regulation of meiotic plaque (MP) component levels in a dependency on external acetate. Has a role in ascus formation.</text>
</comment>
<comment type="subcellular location">
    <subcellularLocation>
        <location evidence="6 8">Cell membrane</location>
        <topology evidence="6 8">Multi-pass membrane protein</topology>
    </subcellularLocation>
    <subcellularLocation>
        <location evidence="6">Vacuole membrane</location>
        <topology evidence="6">Multi-pass membrane protein</topology>
    </subcellularLocation>
    <text>Localizes to large detergent resistant patches of the cell membrane (DRM) enriched in ergosterol and sphingolipids (PubMed:17395151).</text>
</comment>
<comment type="induction">
    <text evidence="6 8">During meiosis and by external ammonia.</text>
</comment>
<comment type="similarity">
    <text evidence="9">Belongs to the acetate uptake transporter (AceTr) (TC 2.A.96) family.</text>
</comment>
<reference key="1">
    <citation type="journal article" date="1992" name="Yeast">
        <title>The complete sequence of a 10.8 kb segment distal of SUF2 on the right arm of chromosome III from Saccharomyces cerevisiae reveals seven open reading frames including the RVS161, ADP1 and PGK genes.</title>
        <authorList>
            <person name="Skala J."/>
            <person name="Purnelle B."/>
            <person name="Goffeau A."/>
        </authorList>
    </citation>
    <scope>NUCLEOTIDE SEQUENCE [GENOMIC DNA]</scope>
</reference>
<reference key="2">
    <citation type="journal article" date="1992" name="Nature">
        <title>The complete DNA sequence of yeast chromosome III.</title>
        <authorList>
            <person name="Oliver S.G."/>
            <person name="van der Aart Q.J.M."/>
            <person name="Agostoni-Carbone M.L."/>
            <person name="Aigle M."/>
            <person name="Alberghina L."/>
            <person name="Alexandraki D."/>
            <person name="Antoine G."/>
            <person name="Anwar R."/>
            <person name="Ballesta J.P.G."/>
            <person name="Benit P."/>
            <person name="Berben G."/>
            <person name="Bergantino E."/>
            <person name="Biteau N."/>
            <person name="Bolle P.-A."/>
            <person name="Bolotin-Fukuhara M."/>
            <person name="Brown A."/>
            <person name="Brown A.J.P."/>
            <person name="Buhler J.-M."/>
            <person name="Carcano C."/>
            <person name="Carignani G."/>
            <person name="Cederberg H."/>
            <person name="Chanet R."/>
            <person name="Contreras R."/>
            <person name="Crouzet M."/>
            <person name="Daignan-Fornier B."/>
            <person name="Defoor E."/>
            <person name="Delgado M.D."/>
            <person name="Demolder J."/>
            <person name="Doira C."/>
            <person name="Dubois E."/>
            <person name="Dujon B."/>
            <person name="Duesterhoeft A."/>
            <person name="Erdmann D."/>
            <person name="Esteban M."/>
            <person name="Fabre F."/>
            <person name="Fairhead C."/>
            <person name="Faye G."/>
            <person name="Feldmann H."/>
            <person name="Fiers W."/>
            <person name="Francingues-Gaillard M.-C."/>
            <person name="Franco L."/>
            <person name="Frontali L."/>
            <person name="Fukuhara H."/>
            <person name="Fuller L.J."/>
            <person name="Galland P."/>
            <person name="Gent M.E."/>
            <person name="Gigot D."/>
            <person name="Gilliquet V."/>
            <person name="Glansdorff N."/>
            <person name="Goffeau A."/>
            <person name="Grenson M."/>
            <person name="Grisanti P."/>
            <person name="Grivell L.A."/>
            <person name="de Haan M."/>
            <person name="Haasemann M."/>
            <person name="Hatat D."/>
            <person name="Hoenicka J."/>
            <person name="Hegemann J.H."/>
            <person name="Herbert C.J."/>
            <person name="Hilger F."/>
            <person name="Hohmann S."/>
            <person name="Hollenberg C.P."/>
            <person name="Huse K."/>
            <person name="Iborra F."/>
            <person name="Indge K.J."/>
            <person name="Isono K."/>
            <person name="Jacq C."/>
            <person name="Jacquet M."/>
            <person name="James C.M."/>
            <person name="Jauniaux J.-C."/>
            <person name="Jia Y."/>
            <person name="Jimenez A."/>
            <person name="Kelly A."/>
            <person name="Kleinhans U."/>
            <person name="Kreisl P."/>
            <person name="Lanfranchi G."/>
            <person name="Lewis C."/>
            <person name="van der Linden C.G."/>
            <person name="Lucchini G."/>
            <person name="Lutzenkirchen K."/>
            <person name="Maat M.J."/>
            <person name="Mallet L."/>
            <person name="Mannhaupt G."/>
            <person name="Martegani E."/>
            <person name="Mathieu A."/>
            <person name="Maurer C.T.C."/>
            <person name="McConnell D."/>
            <person name="McKee R.A."/>
            <person name="Messenguy F."/>
            <person name="Mewes H.-W."/>
            <person name="Molemans F."/>
            <person name="Montague M.A."/>
            <person name="Muzi Falconi M."/>
            <person name="Navas L."/>
            <person name="Newlon C.S."/>
            <person name="Noone D."/>
            <person name="Pallier C."/>
            <person name="Panzeri L."/>
            <person name="Pearson B.M."/>
            <person name="Perea J."/>
            <person name="Philippsen P."/>
            <person name="Pierard A."/>
            <person name="Planta R.J."/>
            <person name="Plevani P."/>
            <person name="Poetsch B."/>
            <person name="Pohl F.M."/>
            <person name="Purnelle B."/>
            <person name="Ramezani Rad M."/>
            <person name="Rasmussen S.W."/>
            <person name="Raynal A."/>
            <person name="Remacha M.A."/>
            <person name="Richterich P."/>
            <person name="Roberts A.B."/>
            <person name="Rodriguez F."/>
            <person name="Sanz E."/>
            <person name="Schaaff-Gerstenschlaeger I."/>
            <person name="Scherens B."/>
            <person name="Schweitzer B."/>
            <person name="Shu Y."/>
            <person name="Skala J."/>
            <person name="Slonimski P.P."/>
            <person name="Sor F."/>
            <person name="Soustelle C."/>
            <person name="Spiegelberg R."/>
            <person name="Stateva L.I."/>
            <person name="Steensma H.Y."/>
            <person name="Steiner S."/>
            <person name="Thierry A."/>
            <person name="Thireos G."/>
            <person name="Tzermia M."/>
            <person name="Urrestarazu L.A."/>
            <person name="Valle G."/>
            <person name="Vetter I."/>
            <person name="van Vliet-Reedijk J.C."/>
            <person name="Voet M."/>
            <person name="Volckaert G."/>
            <person name="Vreken P."/>
            <person name="Wang H."/>
            <person name="Warmington J.R."/>
            <person name="von Wettstein D."/>
            <person name="Wicksteed B.L."/>
            <person name="Wilson C."/>
            <person name="Wurst H."/>
            <person name="Xu G."/>
            <person name="Yoshikawa A."/>
            <person name="Zimmermann F.K."/>
            <person name="Sgouros J.G."/>
        </authorList>
    </citation>
    <scope>NUCLEOTIDE SEQUENCE [LARGE SCALE GENOMIC DNA]</scope>
    <source>
        <strain>ATCC 204508 / S288c</strain>
    </source>
</reference>
<reference key="3">
    <citation type="journal article" date="2014" name="G3 (Bethesda)">
        <title>The reference genome sequence of Saccharomyces cerevisiae: Then and now.</title>
        <authorList>
            <person name="Engel S.R."/>
            <person name="Dietrich F.S."/>
            <person name="Fisk D.G."/>
            <person name="Binkley G."/>
            <person name="Balakrishnan R."/>
            <person name="Costanzo M.C."/>
            <person name="Dwight S.S."/>
            <person name="Hitz B.C."/>
            <person name="Karra K."/>
            <person name="Nash R.S."/>
            <person name="Weng S."/>
            <person name="Wong E.D."/>
            <person name="Lloyd P."/>
            <person name="Skrzypek M.S."/>
            <person name="Miyasato S.R."/>
            <person name="Simison M."/>
            <person name="Cherry J.M."/>
        </authorList>
    </citation>
    <scope>GENOME REANNOTATION</scope>
    <source>
        <strain>ATCC 204508 / S288c</strain>
    </source>
</reference>
<reference key="4">
    <citation type="journal article" date="2006" name="Proc. Natl. Acad. Sci. U.S.A.">
        <title>A global topology map of the Saccharomyces cerevisiae membrane proteome.</title>
        <authorList>
            <person name="Kim H."/>
            <person name="Melen K."/>
            <person name="Oesterberg M."/>
            <person name="von Heijne G."/>
        </authorList>
    </citation>
    <scope>TOPOLOGY [LARGE SCALE ANALYSIS]</scope>
    <source>
        <strain>ATCC 208353 / W303-1A</strain>
    </source>
</reference>
<reference key="5">
    <citation type="journal article" date="2001" name="Curr. Biol.">
        <title>A screen for genes required for meiosis and spore formation based on whole-genome expression.</title>
        <authorList>
            <person name="Rabitsch K.P."/>
            <person name="Toth A."/>
            <person name="Galova M."/>
            <person name="Schleiffer A."/>
            <person name="Schaffner G."/>
            <person name="Aigner E."/>
            <person name="Rupp C."/>
            <person name="Penkner A.M."/>
            <person name="Moreno-Borchart A.C."/>
            <person name="Primig M."/>
            <person name="Esposito R.E."/>
            <person name="Klein F."/>
            <person name="Knop M."/>
            <person name="Nasmyth K."/>
        </authorList>
    </citation>
    <scope>FUNCTION</scope>
</reference>
<reference key="6">
    <citation type="journal article" date="2002" name="Mol. Biol. Cell">
        <title>Ammonia pulses and metabolic oscillations guide yeast colony development.</title>
        <authorList>
            <person name="Palkova Z."/>
            <person name="Devaux F."/>
            <person name="Icicova M."/>
            <person name="Minarikova L."/>
            <person name="Le Crom S."/>
            <person name="Jacq C."/>
        </authorList>
    </citation>
    <scope>FUNCTION</scope>
</reference>
<reference key="7">
    <citation type="journal article" date="2004" name="Yeast">
        <title>Ady2p is essential for the acetate permease activity in the yeast Saccharomyces cerevisiae.</title>
        <authorList>
            <person name="Paiva S."/>
            <person name="Devaux F."/>
            <person name="Barbosa S."/>
            <person name="Jacq C."/>
            <person name="Casal M."/>
        </authorList>
    </citation>
    <scope>FUNCTION</scope>
</reference>
<reference key="8">
    <citation type="journal article" date="2005" name="J. Cell Biol.">
        <title>Spore number control and breeding in Saccharomyces cerevisiae: a key role for a self-organizing system.</title>
        <authorList>
            <person name="Taxis C."/>
            <person name="Keller P."/>
            <person name="Kavagiou Z."/>
            <person name="Jensen L.J."/>
            <person name="Colombelli J."/>
            <person name="Bork P."/>
            <person name="Stelzer E.H.K."/>
            <person name="Knop M."/>
        </authorList>
    </citation>
    <scope>FUNCTION</scope>
    <scope>SUBCELLULAR LOCATION</scope>
    <scope>INDUCTION</scope>
</reference>
<reference key="9">
    <citation type="journal article" date="2007" name="Biochim. Biophys. Acta">
        <title>Association of putative ammonium exporters Ato with detergent-resistant compartments of plasma membrane during yeast colony development: pH affects Ato1p localisation in patches.</title>
        <authorList>
            <person name="Ricicova M."/>
            <person name="Kucerova H."/>
            <person name="Vachova L."/>
            <person name="Palkova Z."/>
        </authorList>
    </citation>
    <scope>SUBCELLULAR LOCATION</scope>
    <scope>INDUCTION</scope>
</reference>
<reference key="10">
    <citation type="journal article" date="2007" name="FEMS Yeast Res.">
        <title>Mutations at different sites in members of the Gpr1/Fun34/YaaH protein family cause hypersensitivity to acetic acid in Saccharomyces cerevisiae as well as in Yarrowia lipolytica.</title>
        <authorList>
            <person name="Gentsch M."/>
            <person name="Kuschel M."/>
            <person name="Schlegel S."/>
            <person name="Barth G."/>
        </authorList>
    </citation>
    <scope>FUNCTION</scope>
</reference>
<reference key="11">
    <citation type="journal article" date="2007" name="Mol. Cell. Proteomics">
        <title>Profiling phosphoproteins of yeast mitochondria reveals a role of phosphorylation in assembly of the ATP synthase.</title>
        <authorList>
            <person name="Reinders J."/>
            <person name="Wagner K."/>
            <person name="Zahedi R.P."/>
            <person name="Stojanovski D."/>
            <person name="Eyrich B."/>
            <person name="van der Laan M."/>
            <person name="Rehling P."/>
            <person name="Sickmann A."/>
            <person name="Pfanner N."/>
            <person name="Meisinger C."/>
        </authorList>
    </citation>
    <scope>IDENTIFICATION BY MASS SPECTROMETRY [LARGE SCALE ANALYSIS]</scope>
    <source>
        <strain>ATCC 76625 / YPH499</strain>
    </source>
</reference>
<keyword id="KW-0924">Ammonia transport</keyword>
<keyword id="KW-1003">Cell membrane</keyword>
<keyword id="KW-0406">Ion transport</keyword>
<keyword id="KW-0469">Meiosis</keyword>
<keyword id="KW-0472">Membrane</keyword>
<keyword id="KW-1185">Reference proteome</keyword>
<keyword id="KW-0812">Transmembrane</keyword>
<keyword id="KW-1133">Transmembrane helix</keyword>
<keyword id="KW-0813">Transport</keyword>
<keyword id="KW-0926">Vacuole</keyword>